<comment type="function">
    <text evidence="1">Produces ATP from ADP in the presence of a proton gradient across the membrane.</text>
</comment>
<comment type="subunit">
    <text evidence="1">F-type ATPases have 2 components, CF(1) - the catalytic core - and CF(0) - the membrane proton channel. CF(1) has five subunits: alpha(3), beta(3), gamma(1), delta(1), epsilon(1). CF(0) has three main subunits: a, b and c.</text>
</comment>
<comment type="subcellular location">
    <subcellularLocation>
        <location evidence="1">Cell inner membrane</location>
        <topology evidence="1">Peripheral membrane protein</topology>
    </subcellularLocation>
</comment>
<comment type="similarity">
    <text evidence="1">Belongs to the ATPase epsilon chain family.</text>
</comment>
<reference key="1">
    <citation type="journal article" date="2007" name="Proc. Natl. Acad. Sci. U.S.A.">
        <title>Deep-sea vent epsilon-proteobacterial genomes provide insights into emergence of pathogens.</title>
        <authorList>
            <person name="Nakagawa S."/>
            <person name="Takaki Y."/>
            <person name="Shimamura S."/>
            <person name="Reysenbach A.-L."/>
            <person name="Takai K."/>
            <person name="Horikoshi K."/>
        </authorList>
    </citation>
    <scope>NUCLEOTIDE SEQUENCE [LARGE SCALE GENOMIC DNA]</scope>
    <source>
        <strain>NBC37-1</strain>
    </source>
</reference>
<keyword id="KW-0066">ATP synthesis</keyword>
<keyword id="KW-0997">Cell inner membrane</keyword>
<keyword id="KW-1003">Cell membrane</keyword>
<keyword id="KW-0139">CF(1)</keyword>
<keyword id="KW-0375">Hydrogen ion transport</keyword>
<keyword id="KW-0406">Ion transport</keyword>
<keyword id="KW-0472">Membrane</keyword>
<keyword id="KW-0813">Transport</keyword>
<gene>
    <name evidence="1" type="primary">atpC</name>
    <name type="ordered locus">SUN_1770</name>
</gene>
<evidence type="ECO:0000255" key="1">
    <source>
        <dbReference type="HAMAP-Rule" id="MF_00530"/>
    </source>
</evidence>
<protein>
    <recommendedName>
        <fullName evidence="1">ATP synthase epsilon chain</fullName>
    </recommendedName>
    <alternativeName>
        <fullName evidence="1">ATP synthase F1 sector epsilon subunit</fullName>
    </alternativeName>
    <alternativeName>
        <fullName evidence="1">F-ATPase epsilon subunit</fullName>
    </alternativeName>
</protein>
<proteinExistence type="inferred from homology"/>
<sequence>MELMKLEIVTPNGVIFDDDVKQVTLPGSEGEFGVLPKHATLVSLLDTGVIVIEKADGSEVAVAINSGYVKVDEEKTTCIVDGAVALSGEDSDLAKALEEAKELIKKAESSSVAIASAVSKVEQIGKSF</sequence>
<dbReference type="EMBL" id="AP009179">
    <property type="protein sequence ID" value="BAF72717.1"/>
    <property type="molecule type" value="Genomic_DNA"/>
</dbReference>
<dbReference type="RefSeq" id="WP_012083527.1">
    <property type="nucleotide sequence ID" value="NC_009663.1"/>
</dbReference>
<dbReference type="SMR" id="A6QB58"/>
<dbReference type="STRING" id="387093.SUN_1770"/>
<dbReference type="KEGG" id="sun:SUN_1770"/>
<dbReference type="eggNOG" id="COG0355">
    <property type="taxonomic scope" value="Bacteria"/>
</dbReference>
<dbReference type="HOGENOM" id="CLU_084338_2_1_7"/>
<dbReference type="OrthoDB" id="9799969at2"/>
<dbReference type="Proteomes" id="UP000006378">
    <property type="component" value="Chromosome"/>
</dbReference>
<dbReference type="GO" id="GO:0005886">
    <property type="term" value="C:plasma membrane"/>
    <property type="evidence" value="ECO:0007669"/>
    <property type="project" value="UniProtKB-SubCell"/>
</dbReference>
<dbReference type="GO" id="GO:0045259">
    <property type="term" value="C:proton-transporting ATP synthase complex"/>
    <property type="evidence" value="ECO:0007669"/>
    <property type="project" value="UniProtKB-KW"/>
</dbReference>
<dbReference type="GO" id="GO:0005524">
    <property type="term" value="F:ATP binding"/>
    <property type="evidence" value="ECO:0007669"/>
    <property type="project" value="UniProtKB-UniRule"/>
</dbReference>
<dbReference type="GO" id="GO:0046933">
    <property type="term" value="F:proton-transporting ATP synthase activity, rotational mechanism"/>
    <property type="evidence" value="ECO:0007669"/>
    <property type="project" value="UniProtKB-UniRule"/>
</dbReference>
<dbReference type="CDD" id="cd12152">
    <property type="entry name" value="F1-ATPase_delta"/>
    <property type="match status" value="1"/>
</dbReference>
<dbReference type="Gene3D" id="2.60.15.10">
    <property type="entry name" value="F0F1 ATP synthase delta/epsilon subunit, N-terminal"/>
    <property type="match status" value="1"/>
</dbReference>
<dbReference type="HAMAP" id="MF_00530">
    <property type="entry name" value="ATP_synth_epsil_bac"/>
    <property type="match status" value="1"/>
</dbReference>
<dbReference type="InterPro" id="IPR001469">
    <property type="entry name" value="ATP_synth_F1_dsu/esu"/>
</dbReference>
<dbReference type="InterPro" id="IPR020546">
    <property type="entry name" value="ATP_synth_F1_dsu/esu_N"/>
</dbReference>
<dbReference type="InterPro" id="IPR036771">
    <property type="entry name" value="ATPsynth_dsu/esu_N"/>
</dbReference>
<dbReference type="NCBIfam" id="TIGR01216">
    <property type="entry name" value="ATP_synt_epsi"/>
    <property type="match status" value="1"/>
</dbReference>
<dbReference type="PANTHER" id="PTHR13822">
    <property type="entry name" value="ATP SYNTHASE DELTA/EPSILON CHAIN"/>
    <property type="match status" value="1"/>
</dbReference>
<dbReference type="PANTHER" id="PTHR13822:SF10">
    <property type="entry name" value="ATP SYNTHASE EPSILON CHAIN, CHLOROPLASTIC"/>
    <property type="match status" value="1"/>
</dbReference>
<dbReference type="Pfam" id="PF02823">
    <property type="entry name" value="ATP-synt_DE_N"/>
    <property type="match status" value="1"/>
</dbReference>
<dbReference type="SUPFAM" id="SSF51344">
    <property type="entry name" value="Epsilon subunit of F1F0-ATP synthase N-terminal domain"/>
    <property type="match status" value="1"/>
</dbReference>
<organism>
    <name type="scientific">Sulfurovum sp. (strain NBC37-1)</name>
    <dbReference type="NCBI Taxonomy" id="387093"/>
    <lineage>
        <taxon>Bacteria</taxon>
        <taxon>Pseudomonadati</taxon>
        <taxon>Campylobacterota</taxon>
        <taxon>Epsilonproteobacteria</taxon>
        <taxon>Campylobacterales</taxon>
        <taxon>Sulfurovaceae</taxon>
        <taxon>Sulfurovum</taxon>
    </lineage>
</organism>
<name>ATPE_SULNB</name>
<accession>A6QB58</accession>
<feature type="chain" id="PRO_1000081753" description="ATP synthase epsilon chain">
    <location>
        <begin position="1"/>
        <end position="128"/>
    </location>
</feature>